<comment type="catalytic activity">
    <reaction evidence="1">
        <text>tRNA(Phe) + L-phenylalanine + ATP = L-phenylalanyl-tRNA(Phe) + AMP + diphosphate + H(+)</text>
        <dbReference type="Rhea" id="RHEA:19413"/>
        <dbReference type="Rhea" id="RHEA-COMP:9668"/>
        <dbReference type="Rhea" id="RHEA-COMP:9699"/>
        <dbReference type="ChEBI" id="CHEBI:15378"/>
        <dbReference type="ChEBI" id="CHEBI:30616"/>
        <dbReference type="ChEBI" id="CHEBI:33019"/>
        <dbReference type="ChEBI" id="CHEBI:58095"/>
        <dbReference type="ChEBI" id="CHEBI:78442"/>
        <dbReference type="ChEBI" id="CHEBI:78531"/>
        <dbReference type="ChEBI" id="CHEBI:456215"/>
        <dbReference type="EC" id="6.1.1.20"/>
    </reaction>
</comment>
<comment type="cofactor">
    <cofactor evidence="1">
        <name>Mg(2+)</name>
        <dbReference type="ChEBI" id="CHEBI:18420"/>
    </cofactor>
    <text evidence="1">Binds 2 magnesium ions per tetramer.</text>
</comment>
<comment type="subunit">
    <text evidence="1">Tetramer of two alpha and two beta subunits.</text>
</comment>
<comment type="subcellular location">
    <subcellularLocation>
        <location evidence="1">Cytoplasm</location>
    </subcellularLocation>
</comment>
<comment type="similarity">
    <text evidence="1">Belongs to the class-II aminoacyl-tRNA synthetase family. Phe-tRNA synthetase alpha subunit type 1 subfamily.</text>
</comment>
<organism>
    <name type="scientific">Parabacteroides distasonis (strain ATCC 8503 / DSM 20701 / CIP 104284 / JCM 5825 / NCTC 11152)</name>
    <dbReference type="NCBI Taxonomy" id="435591"/>
    <lineage>
        <taxon>Bacteria</taxon>
        <taxon>Pseudomonadati</taxon>
        <taxon>Bacteroidota</taxon>
        <taxon>Bacteroidia</taxon>
        <taxon>Bacteroidales</taxon>
        <taxon>Tannerellaceae</taxon>
        <taxon>Parabacteroides</taxon>
    </lineage>
</organism>
<evidence type="ECO:0000255" key="1">
    <source>
        <dbReference type="HAMAP-Rule" id="MF_00281"/>
    </source>
</evidence>
<gene>
    <name evidence="1" type="primary">pheS</name>
    <name type="ordered locus">BDI_0836</name>
</gene>
<dbReference type="EC" id="6.1.1.20" evidence="1"/>
<dbReference type="EMBL" id="CP000140">
    <property type="protein sequence ID" value="ABR42606.1"/>
    <property type="molecule type" value="Genomic_DNA"/>
</dbReference>
<dbReference type="RefSeq" id="WP_005857329.1">
    <property type="nucleotide sequence ID" value="NC_009615.1"/>
</dbReference>
<dbReference type="SMR" id="A6LA92"/>
<dbReference type="STRING" id="435591.BDI_0836"/>
<dbReference type="PaxDb" id="435591-BDI_0836"/>
<dbReference type="GeneID" id="93525874"/>
<dbReference type="KEGG" id="pdi:BDI_0836"/>
<dbReference type="eggNOG" id="COG0016">
    <property type="taxonomic scope" value="Bacteria"/>
</dbReference>
<dbReference type="HOGENOM" id="CLU_025086_0_1_10"/>
<dbReference type="BioCyc" id="PDIS435591:G1G5A-856-MONOMER"/>
<dbReference type="Proteomes" id="UP000000566">
    <property type="component" value="Chromosome"/>
</dbReference>
<dbReference type="GO" id="GO:0005737">
    <property type="term" value="C:cytoplasm"/>
    <property type="evidence" value="ECO:0007669"/>
    <property type="project" value="UniProtKB-SubCell"/>
</dbReference>
<dbReference type="GO" id="GO:0005524">
    <property type="term" value="F:ATP binding"/>
    <property type="evidence" value="ECO:0007669"/>
    <property type="project" value="UniProtKB-UniRule"/>
</dbReference>
<dbReference type="GO" id="GO:0000287">
    <property type="term" value="F:magnesium ion binding"/>
    <property type="evidence" value="ECO:0007669"/>
    <property type="project" value="UniProtKB-UniRule"/>
</dbReference>
<dbReference type="GO" id="GO:0004826">
    <property type="term" value="F:phenylalanine-tRNA ligase activity"/>
    <property type="evidence" value="ECO:0007669"/>
    <property type="project" value="UniProtKB-UniRule"/>
</dbReference>
<dbReference type="GO" id="GO:0000049">
    <property type="term" value="F:tRNA binding"/>
    <property type="evidence" value="ECO:0007669"/>
    <property type="project" value="InterPro"/>
</dbReference>
<dbReference type="GO" id="GO:0006432">
    <property type="term" value="P:phenylalanyl-tRNA aminoacylation"/>
    <property type="evidence" value="ECO:0007669"/>
    <property type="project" value="UniProtKB-UniRule"/>
</dbReference>
<dbReference type="CDD" id="cd00496">
    <property type="entry name" value="PheRS_alpha_core"/>
    <property type="match status" value="1"/>
</dbReference>
<dbReference type="FunFam" id="3.30.930.10:FF:000003">
    <property type="entry name" value="Phenylalanine--tRNA ligase alpha subunit"/>
    <property type="match status" value="1"/>
</dbReference>
<dbReference type="Gene3D" id="3.30.930.10">
    <property type="entry name" value="Bira Bifunctional Protein, Domain 2"/>
    <property type="match status" value="1"/>
</dbReference>
<dbReference type="HAMAP" id="MF_00281">
    <property type="entry name" value="Phe_tRNA_synth_alpha1"/>
    <property type="match status" value="1"/>
</dbReference>
<dbReference type="InterPro" id="IPR006195">
    <property type="entry name" value="aa-tRNA-synth_II"/>
</dbReference>
<dbReference type="InterPro" id="IPR045864">
    <property type="entry name" value="aa-tRNA-synth_II/BPL/LPL"/>
</dbReference>
<dbReference type="InterPro" id="IPR004529">
    <property type="entry name" value="Phe-tRNA-synth_IIc_asu"/>
</dbReference>
<dbReference type="InterPro" id="IPR004188">
    <property type="entry name" value="Phe-tRNA_ligase_II_N"/>
</dbReference>
<dbReference type="InterPro" id="IPR022911">
    <property type="entry name" value="Phe_tRNA_ligase_alpha1_bac"/>
</dbReference>
<dbReference type="InterPro" id="IPR002319">
    <property type="entry name" value="Phenylalanyl-tRNA_Synthase"/>
</dbReference>
<dbReference type="InterPro" id="IPR010978">
    <property type="entry name" value="tRNA-bd_arm"/>
</dbReference>
<dbReference type="NCBIfam" id="TIGR00468">
    <property type="entry name" value="pheS"/>
    <property type="match status" value="1"/>
</dbReference>
<dbReference type="PANTHER" id="PTHR11538:SF41">
    <property type="entry name" value="PHENYLALANINE--TRNA LIGASE, MITOCHONDRIAL"/>
    <property type="match status" value="1"/>
</dbReference>
<dbReference type="PANTHER" id="PTHR11538">
    <property type="entry name" value="PHENYLALANYL-TRNA SYNTHETASE"/>
    <property type="match status" value="1"/>
</dbReference>
<dbReference type="Pfam" id="PF02912">
    <property type="entry name" value="Phe_tRNA-synt_N"/>
    <property type="match status" value="1"/>
</dbReference>
<dbReference type="Pfam" id="PF01409">
    <property type="entry name" value="tRNA-synt_2d"/>
    <property type="match status" value="1"/>
</dbReference>
<dbReference type="SUPFAM" id="SSF55681">
    <property type="entry name" value="Class II aaRS and biotin synthetases"/>
    <property type="match status" value="1"/>
</dbReference>
<dbReference type="SUPFAM" id="SSF46589">
    <property type="entry name" value="tRNA-binding arm"/>
    <property type="match status" value="1"/>
</dbReference>
<dbReference type="PROSITE" id="PS50862">
    <property type="entry name" value="AA_TRNA_LIGASE_II"/>
    <property type="match status" value="1"/>
</dbReference>
<proteinExistence type="inferred from homology"/>
<protein>
    <recommendedName>
        <fullName evidence="1">Phenylalanine--tRNA ligase alpha subunit</fullName>
        <ecNumber evidence="1">6.1.1.20</ecNumber>
    </recommendedName>
    <alternativeName>
        <fullName evidence="1">Phenylalanyl-tRNA synthetase alpha subunit</fullName>
        <shortName evidence="1">PheRS</shortName>
    </alternativeName>
</protein>
<accession>A6LA92</accession>
<reference key="1">
    <citation type="journal article" date="2007" name="PLoS Biol.">
        <title>Evolution of symbiotic bacteria in the distal human intestine.</title>
        <authorList>
            <person name="Xu J."/>
            <person name="Mahowald M.A."/>
            <person name="Ley R.E."/>
            <person name="Lozupone C.A."/>
            <person name="Hamady M."/>
            <person name="Martens E.C."/>
            <person name="Henrissat B."/>
            <person name="Coutinho P.M."/>
            <person name="Minx P."/>
            <person name="Latreille P."/>
            <person name="Cordum H."/>
            <person name="Van Brunt A."/>
            <person name="Kim K."/>
            <person name="Fulton R.S."/>
            <person name="Fulton L.A."/>
            <person name="Clifton S.W."/>
            <person name="Wilson R.K."/>
            <person name="Knight R.D."/>
            <person name="Gordon J.I."/>
        </authorList>
    </citation>
    <scope>NUCLEOTIDE SEQUENCE [LARGE SCALE GENOMIC DNA]</scope>
    <source>
        <strain>ATCC 8503 / DSM 20701 / CIP 104284 / JCM 5825 / NCTC 11152</strain>
    </source>
</reference>
<sequence>MLDKIKALLQEVENMKAANAEELEALRIKYLSKKGEISALMNDFRNVAADQKREVGKYLNELKETTQSKINELKESFENVQTANDDIDLTRTAYPIELGTRHPLSLVKKEICDIFGRLGFSIAEGPEIEDDWHVFSSLNFAEDHPARDMQDTFFIQHNPDVLLRTHTSSVQTRVMEKQEPPIRIICPGRVYRNEAISYRAHCFFHQVEALYVDKNVSFADLKQALLFFAKEMFSPDTKIRLRPSYFPFTEPSAEMDISCNICGGKGCPFCKGTGWVEILGCGMVDPNVLENCGIDSKVYSGYALGMGIERITNLKYQVKDLRMFSENDVRFLRQFESAN</sequence>
<feature type="chain" id="PRO_1000006869" description="Phenylalanine--tRNA ligase alpha subunit">
    <location>
        <begin position="1"/>
        <end position="339"/>
    </location>
</feature>
<feature type="binding site" evidence="1">
    <location>
        <position position="250"/>
    </location>
    <ligand>
        <name>Mg(2+)</name>
        <dbReference type="ChEBI" id="CHEBI:18420"/>
        <note>shared with beta subunit</note>
    </ligand>
</feature>
<keyword id="KW-0030">Aminoacyl-tRNA synthetase</keyword>
<keyword id="KW-0067">ATP-binding</keyword>
<keyword id="KW-0963">Cytoplasm</keyword>
<keyword id="KW-0436">Ligase</keyword>
<keyword id="KW-0460">Magnesium</keyword>
<keyword id="KW-0479">Metal-binding</keyword>
<keyword id="KW-0547">Nucleotide-binding</keyword>
<keyword id="KW-0648">Protein biosynthesis</keyword>
<keyword id="KW-1185">Reference proteome</keyword>
<name>SYFA_PARD8</name>